<sequence length="115" mass="11463">MASSAVIKLALVVALCMAVSVAHAITCSQVSANLAPCINYVRSGGAVPPACCNGIKTINGLAKTTPDRQAACNCLKNLAGSVSGVNPGNAESLPGKCGVNVPYKISTSTNCATVK</sequence>
<dbReference type="EMBL" id="AF221503">
    <property type="protein sequence ID" value="AAF26451.1"/>
    <property type="molecule type" value="mRNA"/>
</dbReference>
<dbReference type="SMR" id="Q9M5X6"/>
<dbReference type="Allergome" id="1066">
    <property type="allergen name" value="Pyr c 3"/>
</dbReference>
<dbReference type="Allergome" id="3458">
    <property type="allergen name" value="Pyr c 3.0101"/>
</dbReference>
<dbReference type="GO" id="GO:0008289">
    <property type="term" value="F:lipid binding"/>
    <property type="evidence" value="ECO:0007669"/>
    <property type="project" value="UniProtKB-KW"/>
</dbReference>
<dbReference type="GO" id="GO:0006869">
    <property type="term" value="P:lipid transport"/>
    <property type="evidence" value="ECO:0007669"/>
    <property type="project" value="InterPro"/>
</dbReference>
<dbReference type="CDD" id="cd01960">
    <property type="entry name" value="nsLTP1"/>
    <property type="match status" value="1"/>
</dbReference>
<dbReference type="FunFam" id="1.10.110.10:FF:000002">
    <property type="entry name" value="Non-specific lipid-transfer protein"/>
    <property type="match status" value="1"/>
</dbReference>
<dbReference type="Gene3D" id="1.10.110.10">
    <property type="entry name" value="Plant lipid-transfer and hydrophobic proteins"/>
    <property type="match status" value="1"/>
</dbReference>
<dbReference type="InterPro" id="IPR036312">
    <property type="entry name" value="Bifun_inhib/LTP/seed_sf"/>
</dbReference>
<dbReference type="InterPro" id="IPR016140">
    <property type="entry name" value="Bifunc_inhib/LTP/seed_store"/>
</dbReference>
<dbReference type="InterPro" id="IPR000528">
    <property type="entry name" value="Plant_nsLTP"/>
</dbReference>
<dbReference type="PANTHER" id="PTHR33076">
    <property type="entry name" value="NON-SPECIFIC LIPID-TRANSFER PROTEIN 2-RELATED"/>
    <property type="match status" value="1"/>
</dbReference>
<dbReference type="Pfam" id="PF00234">
    <property type="entry name" value="Tryp_alpha_amyl"/>
    <property type="match status" value="1"/>
</dbReference>
<dbReference type="PRINTS" id="PR00382">
    <property type="entry name" value="LIPIDTRNSFER"/>
</dbReference>
<dbReference type="SMART" id="SM00499">
    <property type="entry name" value="AAI"/>
    <property type="match status" value="1"/>
</dbReference>
<dbReference type="SUPFAM" id="SSF47699">
    <property type="entry name" value="Bifunctional inhibitor/lipid-transfer protein/seed storage 2S albumin"/>
    <property type="match status" value="1"/>
</dbReference>
<dbReference type="PROSITE" id="PS00597">
    <property type="entry name" value="PLANT_LTP"/>
    <property type="match status" value="1"/>
</dbReference>
<proteinExistence type="evidence at protein level"/>
<accession>Q9M5X6</accession>
<organism>
    <name type="scientific">Pyrus communis</name>
    <name type="common">Pear</name>
    <name type="synonym">Pyrus domestica</name>
    <dbReference type="NCBI Taxonomy" id="23211"/>
    <lineage>
        <taxon>Eukaryota</taxon>
        <taxon>Viridiplantae</taxon>
        <taxon>Streptophyta</taxon>
        <taxon>Embryophyta</taxon>
        <taxon>Tracheophyta</taxon>
        <taxon>Spermatophyta</taxon>
        <taxon>Magnoliopsida</taxon>
        <taxon>eudicotyledons</taxon>
        <taxon>Gunneridae</taxon>
        <taxon>Pentapetalae</taxon>
        <taxon>rosids</taxon>
        <taxon>fabids</taxon>
        <taxon>Rosales</taxon>
        <taxon>Rosaceae</taxon>
        <taxon>Amygdaloideae</taxon>
        <taxon>Maleae</taxon>
        <taxon>Pyrus</taxon>
    </lineage>
</organism>
<name>NLTP_PYRCO</name>
<feature type="signal peptide" evidence="2">
    <location>
        <begin position="1"/>
        <end position="24"/>
    </location>
</feature>
<feature type="chain" id="PRO_0000018404" description="Non-specific lipid-transfer protein">
    <location>
        <begin position="25"/>
        <end position="115"/>
    </location>
</feature>
<feature type="disulfide bond" evidence="1">
    <location>
        <begin position="27"/>
        <end position="74"/>
    </location>
</feature>
<feature type="disulfide bond" evidence="1">
    <location>
        <begin position="37"/>
        <end position="51"/>
    </location>
</feature>
<feature type="disulfide bond" evidence="1">
    <location>
        <begin position="52"/>
        <end position="97"/>
    </location>
</feature>
<feature type="disulfide bond" evidence="1">
    <location>
        <begin position="72"/>
        <end position="111"/>
    </location>
</feature>
<keyword id="KW-0020">Allergen</keyword>
<keyword id="KW-1015">Disulfide bond</keyword>
<keyword id="KW-0446">Lipid-binding</keyword>
<keyword id="KW-0732">Signal</keyword>
<keyword id="KW-0813">Transport</keyword>
<comment type="function">
    <text evidence="1">Plant non-specific lipid-transfer proteins transfer phospholipids as well as galactolipids across membranes. May play a role in wax or cutin deposition in the cell walls of expanding epidermal cells and certain secretory tissues (By similarity).</text>
</comment>
<comment type="allergen">
    <text>Causes an allergic reaction in human.</text>
</comment>
<comment type="similarity">
    <text evidence="3">Belongs to the plant LTP family.</text>
</comment>
<reference key="1">
    <citation type="submission" date="2000-01" db="EMBL/GenBank/DDBJ databases">
        <title>Cloning of a cDNA encoding a lipid transfer protein as a potential allergen from Pyrus communis.</title>
        <authorList>
            <person name="Scheurer S."/>
            <person name="Wangorsch A."/>
            <person name="Haustein D."/>
            <person name="Vieths S."/>
        </authorList>
    </citation>
    <scope>NUCLEOTIDE SEQUENCE [MRNA]</scope>
</reference>
<evidence type="ECO:0000250" key="1"/>
<evidence type="ECO:0000255" key="2"/>
<evidence type="ECO:0000305" key="3"/>
<protein>
    <recommendedName>
        <fullName>Non-specific lipid-transfer protein</fullName>
        <shortName>LTP</shortName>
    </recommendedName>
    <allergenName>Pyr c 3</allergenName>
</protein>